<dbReference type="EC" id="3.2.1.67"/>
<dbReference type="EMBL" id="DQ490521">
    <property type="protein sequence ID" value="ABF50897.1"/>
    <property type="molecule type" value="mRNA"/>
</dbReference>
<dbReference type="EMBL" id="AACD01000168">
    <property type="protein sequence ID" value="EAA64377.1"/>
    <property type="molecule type" value="Genomic_DNA"/>
</dbReference>
<dbReference type="EMBL" id="BN001307">
    <property type="protein sequence ID" value="CBF84398.1"/>
    <property type="molecule type" value="Genomic_DNA"/>
</dbReference>
<dbReference type="RefSeq" id="XP_682314.1">
    <property type="nucleotide sequence ID" value="XM_677222.1"/>
</dbReference>
<dbReference type="SMR" id="Q5ARN5"/>
<dbReference type="STRING" id="227321.Q5ARN5"/>
<dbReference type="CAZy" id="GH28">
    <property type="family name" value="Glycoside Hydrolase Family 28"/>
</dbReference>
<dbReference type="GlyCosmos" id="Q5ARN5">
    <property type="glycosylation" value="11 sites, No reported glycans"/>
</dbReference>
<dbReference type="EnsemblFungi" id="CBF84398">
    <property type="protein sequence ID" value="CBF84398"/>
    <property type="gene ID" value="ANIA_09045"/>
</dbReference>
<dbReference type="KEGG" id="ani:ANIA_09045"/>
<dbReference type="VEuPathDB" id="FungiDB:AN9045"/>
<dbReference type="eggNOG" id="ENOG502QPPR">
    <property type="taxonomic scope" value="Eukaryota"/>
</dbReference>
<dbReference type="HOGENOM" id="CLU_016031_1_0_1"/>
<dbReference type="InParanoid" id="Q5ARN5"/>
<dbReference type="OMA" id="SWHLNDC"/>
<dbReference type="OrthoDB" id="187139at2759"/>
<dbReference type="Proteomes" id="UP000000560">
    <property type="component" value="Chromosome VII"/>
</dbReference>
<dbReference type="GO" id="GO:0005576">
    <property type="term" value="C:extracellular region"/>
    <property type="evidence" value="ECO:0007669"/>
    <property type="project" value="UniProtKB-SubCell"/>
</dbReference>
<dbReference type="GO" id="GO:0047911">
    <property type="term" value="F:galacturan 1,4-alpha-galacturonidase activity"/>
    <property type="evidence" value="ECO:0007669"/>
    <property type="project" value="UniProtKB-EC"/>
</dbReference>
<dbReference type="GO" id="GO:0004650">
    <property type="term" value="F:polygalacturonase activity"/>
    <property type="evidence" value="ECO:0000314"/>
    <property type="project" value="UniProtKB"/>
</dbReference>
<dbReference type="GO" id="GO:0071555">
    <property type="term" value="P:cell wall organization"/>
    <property type="evidence" value="ECO:0007669"/>
    <property type="project" value="UniProtKB-KW"/>
</dbReference>
<dbReference type="GO" id="GO:0045490">
    <property type="term" value="P:pectin catabolic process"/>
    <property type="evidence" value="ECO:0000314"/>
    <property type="project" value="UniProtKB"/>
</dbReference>
<dbReference type="FunFam" id="2.160.20.10:FF:000027">
    <property type="entry name" value="Probable exopolygalacturonase X"/>
    <property type="match status" value="1"/>
</dbReference>
<dbReference type="Gene3D" id="2.160.20.10">
    <property type="entry name" value="Single-stranded right-handed beta-helix, Pectin lyase-like"/>
    <property type="match status" value="1"/>
</dbReference>
<dbReference type="InterPro" id="IPR000743">
    <property type="entry name" value="Glyco_hydro_28"/>
</dbReference>
<dbReference type="InterPro" id="IPR012334">
    <property type="entry name" value="Pectin_lyas_fold"/>
</dbReference>
<dbReference type="InterPro" id="IPR011050">
    <property type="entry name" value="Pectin_lyase_fold/virulence"/>
</dbReference>
<dbReference type="PANTHER" id="PTHR31736">
    <property type="match status" value="1"/>
</dbReference>
<dbReference type="PANTHER" id="PTHR31736:SF14">
    <property type="entry name" value="EXOPOLYGALACTURONASE X-1-RELATED"/>
    <property type="match status" value="1"/>
</dbReference>
<dbReference type="Pfam" id="PF00295">
    <property type="entry name" value="Glyco_hydro_28"/>
    <property type="match status" value="1"/>
</dbReference>
<dbReference type="SUPFAM" id="SSF51126">
    <property type="entry name" value="Pectin lyase-like"/>
    <property type="match status" value="1"/>
</dbReference>
<dbReference type="PROSITE" id="PS00502">
    <property type="entry name" value="POLYGALACTURONASE"/>
    <property type="match status" value="1"/>
</dbReference>
<name>PGLX2_EMENI</name>
<reference key="1">
    <citation type="journal article" date="2006" name="Proc. Natl. Acad. Sci. U.S.A.">
        <title>Development and application of a suite of polysaccharide-degrading enzymes for analyzing plant cell walls.</title>
        <authorList>
            <person name="Bauer S."/>
            <person name="Vasu P."/>
            <person name="Persson S."/>
            <person name="Mort A.J."/>
            <person name="Somerville C.R."/>
        </authorList>
    </citation>
    <scope>NUCLEOTIDE SEQUENCE [MRNA]</scope>
    <scope>FUNCTION</scope>
    <source>
        <strain>FGSC A4 / ATCC 38163 / CBS 112.46 / NRRL 194 / M139</strain>
    </source>
</reference>
<reference key="2">
    <citation type="journal article" date="2005" name="Nature">
        <title>Sequencing of Aspergillus nidulans and comparative analysis with A. fumigatus and A. oryzae.</title>
        <authorList>
            <person name="Galagan J.E."/>
            <person name="Calvo S.E."/>
            <person name="Cuomo C."/>
            <person name="Ma L.-J."/>
            <person name="Wortman J.R."/>
            <person name="Batzoglou S."/>
            <person name="Lee S.-I."/>
            <person name="Bastuerkmen M."/>
            <person name="Spevak C.C."/>
            <person name="Clutterbuck J."/>
            <person name="Kapitonov V."/>
            <person name="Jurka J."/>
            <person name="Scazzocchio C."/>
            <person name="Farman M.L."/>
            <person name="Butler J."/>
            <person name="Purcell S."/>
            <person name="Harris S."/>
            <person name="Braus G.H."/>
            <person name="Draht O."/>
            <person name="Busch S."/>
            <person name="D'Enfert C."/>
            <person name="Bouchier C."/>
            <person name="Goldman G.H."/>
            <person name="Bell-Pedersen D."/>
            <person name="Griffiths-Jones S."/>
            <person name="Doonan J.H."/>
            <person name="Yu J."/>
            <person name="Vienken K."/>
            <person name="Pain A."/>
            <person name="Freitag M."/>
            <person name="Selker E.U."/>
            <person name="Archer D.B."/>
            <person name="Penalva M.A."/>
            <person name="Oakley B.R."/>
            <person name="Momany M."/>
            <person name="Tanaka T."/>
            <person name="Kumagai T."/>
            <person name="Asai K."/>
            <person name="Machida M."/>
            <person name="Nierman W.C."/>
            <person name="Denning D.W."/>
            <person name="Caddick M.X."/>
            <person name="Hynes M."/>
            <person name="Paoletti M."/>
            <person name="Fischer R."/>
            <person name="Miller B.L."/>
            <person name="Dyer P.S."/>
            <person name="Sachs M.S."/>
            <person name="Osmani S.A."/>
            <person name="Birren B.W."/>
        </authorList>
    </citation>
    <scope>NUCLEOTIDE SEQUENCE [LARGE SCALE GENOMIC DNA]</scope>
    <source>
        <strain>FGSC A4 / ATCC 38163 / CBS 112.46 / NRRL 194 / M139</strain>
    </source>
</reference>
<reference key="3">
    <citation type="journal article" date="2009" name="Fungal Genet. Biol.">
        <title>The 2008 update of the Aspergillus nidulans genome annotation: a community effort.</title>
        <authorList>
            <person name="Wortman J.R."/>
            <person name="Gilsenan J.M."/>
            <person name="Joardar V."/>
            <person name="Deegan J."/>
            <person name="Clutterbuck J."/>
            <person name="Andersen M.R."/>
            <person name="Archer D."/>
            <person name="Bencina M."/>
            <person name="Braus G."/>
            <person name="Coutinho P."/>
            <person name="von Dohren H."/>
            <person name="Doonan J."/>
            <person name="Driessen A.J."/>
            <person name="Durek P."/>
            <person name="Espeso E."/>
            <person name="Fekete E."/>
            <person name="Flipphi M."/>
            <person name="Estrada C.G."/>
            <person name="Geysens S."/>
            <person name="Goldman G."/>
            <person name="de Groot P.W."/>
            <person name="Hansen K."/>
            <person name="Harris S.D."/>
            <person name="Heinekamp T."/>
            <person name="Helmstaedt K."/>
            <person name="Henrissat B."/>
            <person name="Hofmann G."/>
            <person name="Homan T."/>
            <person name="Horio T."/>
            <person name="Horiuchi H."/>
            <person name="James S."/>
            <person name="Jones M."/>
            <person name="Karaffa L."/>
            <person name="Karanyi Z."/>
            <person name="Kato M."/>
            <person name="Keller N."/>
            <person name="Kelly D.E."/>
            <person name="Kiel J.A."/>
            <person name="Kim J.M."/>
            <person name="van der Klei I.J."/>
            <person name="Klis F.M."/>
            <person name="Kovalchuk A."/>
            <person name="Krasevec N."/>
            <person name="Kubicek C.P."/>
            <person name="Liu B."/>
            <person name="Maccabe A."/>
            <person name="Meyer V."/>
            <person name="Mirabito P."/>
            <person name="Miskei M."/>
            <person name="Mos M."/>
            <person name="Mullins J."/>
            <person name="Nelson D.R."/>
            <person name="Nielsen J."/>
            <person name="Oakley B.R."/>
            <person name="Osmani S.A."/>
            <person name="Pakula T."/>
            <person name="Paszewski A."/>
            <person name="Paulsen I."/>
            <person name="Pilsyk S."/>
            <person name="Pocsi I."/>
            <person name="Punt P.J."/>
            <person name="Ram A.F."/>
            <person name="Ren Q."/>
            <person name="Robellet X."/>
            <person name="Robson G."/>
            <person name="Seiboth B."/>
            <person name="van Solingen P."/>
            <person name="Specht T."/>
            <person name="Sun J."/>
            <person name="Taheri-Talesh N."/>
            <person name="Takeshita N."/>
            <person name="Ussery D."/>
            <person name="vanKuyk P.A."/>
            <person name="Visser H."/>
            <person name="van de Vondervoort P.J."/>
            <person name="de Vries R.P."/>
            <person name="Walton J."/>
            <person name="Xiang X."/>
            <person name="Xiong Y."/>
            <person name="Zeng A.P."/>
            <person name="Brandt B.W."/>
            <person name="Cornell M.J."/>
            <person name="van den Hondel C.A."/>
            <person name="Visser J."/>
            <person name="Oliver S.G."/>
            <person name="Turner G."/>
        </authorList>
    </citation>
    <scope>GENOME REANNOTATION</scope>
    <source>
        <strain>FGSC A4 / ATCC 38163 / CBS 112.46 / NRRL 194 / M139</strain>
    </source>
</reference>
<comment type="function">
    <text evidence="4">Specific in hydrolyzing the terminal glycosidic bond of polygalacturonic acid and oligogalacturonates.</text>
</comment>
<comment type="catalytic activity">
    <reaction>
        <text>[(1-&gt;4)-alpha-D-galacturonosyl](n) + H2O = alpha-D-galacturonate + [(1-&gt;4)-alpha-D-galacturonosyl](n-1)</text>
        <dbReference type="Rhea" id="RHEA:14117"/>
        <dbReference type="Rhea" id="RHEA-COMP:14570"/>
        <dbReference type="Rhea" id="RHEA-COMP:14572"/>
        <dbReference type="ChEBI" id="CHEBI:15377"/>
        <dbReference type="ChEBI" id="CHEBI:58658"/>
        <dbReference type="ChEBI" id="CHEBI:140523"/>
        <dbReference type="EC" id="3.2.1.67"/>
    </reaction>
</comment>
<comment type="subcellular location">
    <subcellularLocation>
        <location evidence="1">Secreted</location>
    </subcellularLocation>
</comment>
<comment type="similarity">
    <text evidence="5">Belongs to the glycosyl hydrolase 28 family.</text>
</comment>
<evidence type="ECO:0000250" key="1"/>
<evidence type="ECO:0000255" key="2"/>
<evidence type="ECO:0000255" key="3">
    <source>
        <dbReference type="PROSITE-ProRule" id="PRU10052"/>
    </source>
</evidence>
<evidence type="ECO:0000269" key="4">
    <source>
    </source>
</evidence>
<evidence type="ECO:0000305" key="5"/>
<accession>Q5ARN5</accession>
<accession>C8VKQ3</accession>
<accession>Q1HFQ3</accession>
<organism>
    <name type="scientific">Emericella nidulans (strain FGSC A4 / ATCC 38163 / CBS 112.46 / NRRL 194 / M139)</name>
    <name type="common">Aspergillus nidulans</name>
    <dbReference type="NCBI Taxonomy" id="227321"/>
    <lineage>
        <taxon>Eukaryota</taxon>
        <taxon>Fungi</taxon>
        <taxon>Dikarya</taxon>
        <taxon>Ascomycota</taxon>
        <taxon>Pezizomycotina</taxon>
        <taxon>Eurotiomycetes</taxon>
        <taxon>Eurotiomycetidae</taxon>
        <taxon>Eurotiales</taxon>
        <taxon>Aspergillaceae</taxon>
        <taxon>Aspergillus</taxon>
        <taxon>Aspergillus subgen. Nidulantes</taxon>
    </lineage>
</organism>
<feature type="signal peptide" evidence="2">
    <location>
        <begin position="1"/>
        <end position="24"/>
    </location>
</feature>
<feature type="chain" id="PRO_0000393673" description="Exopolygalacturonase X-2">
    <location>
        <begin position="25"/>
        <end position="449"/>
    </location>
</feature>
<feature type="repeat" description="PbH1 1">
    <location>
        <begin position="240"/>
        <end position="261"/>
    </location>
</feature>
<feature type="repeat" description="PbH1 2">
    <location>
        <begin position="263"/>
        <end position="283"/>
    </location>
</feature>
<feature type="repeat" description="PbH1 3">
    <location>
        <begin position="294"/>
        <end position="315"/>
    </location>
</feature>
<feature type="active site" description="Proton donor" evidence="3">
    <location>
        <position position="254"/>
    </location>
</feature>
<feature type="active site" evidence="3">
    <location>
        <position position="277"/>
    </location>
</feature>
<feature type="glycosylation site" description="N-linked (GlcNAc...) asparagine" evidence="2">
    <location>
        <position position="136"/>
    </location>
</feature>
<feature type="glycosylation site" description="N-linked (GlcNAc...) asparagine" evidence="2">
    <location>
        <position position="172"/>
    </location>
</feature>
<feature type="glycosylation site" description="N-linked (GlcNAc...) asparagine" evidence="2">
    <location>
        <position position="208"/>
    </location>
</feature>
<feature type="glycosylation site" description="N-linked (GlcNAc...) asparagine" evidence="2">
    <location>
        <position position="262"/>
    </location>
</feature>
<feature type="glycosylation site" description="N-linked (GlcNAc...) asparagine" evidence="2">
    <location>
        <position position="274"/>
    </location>
</feature>
<feature type="glycosylation site" description="N-linked (GlcNAc...) asparagine" evidence="2">
    <location>
        <position position="301"/>
    </location>
</feature>
<feature type="glycosylation site" description="N-linked (GlcNAc...) asparagine" evidence="2">
    <location>
        <position position="306"/>
    </location>
</feature>
<feature type="glycosylation site" description="N-linked (GlcNAc...) asparagine" evidence="2">
    <location>
        <position position="340"/>
    </location>
</feature>
<feature type="glycosylation site" description="N-linked (GlcNAc...) asparagine" evidence="2">
    <location>
        <position position="365"/>
    </location>
</feature>
<feature type="glycosylation site" description="N-linked (GlcNAc...) asparagine" evidence="2">
    <location>
        <position position="416"/>
    </location>
</feature>
<feature type="glycosylation site" description="N-linked (GlcNAc...) asparagine" evidence="2">
    <location>
        <position position="421"/>
    </location>
</feature>
<feature type="disulfide bond" evidence="1">
    <location>
        <begin position="256"/>
        <end position="273"/>
    </location>
</feature>
<feature type="disulfide bond" evidence="1">
    <location>
        <begin position="403"/>
        <end position="409"/>
    </location>
</feature>
<gene>
    <name type="primary">pgaX-2</name>
    <name type="ORF">AN9045</name>
</gene>
<keyword id="KW-0961">Cell wall biogenesis/degradation</keyword>
<keyword id="KW-1015">Disulfide bond</keyword>
<keyword id="KW-0325">Glycoprotein</keyword>
<keyword id="KW-0326">Glycosidase</keyword>
<keyword id="KW-0378">Hydrolase</keyword>
<keyword id="KW-1185">Reference proteome</keyword>
<keyword id="KW-0677">Repeat</keyword>
<keyword id="KW-0964">Secreted</keyword>
<keyword id="KW-0732">Signal</keyword>
<proteinExistence type="evidence at transcript level"/>
<protein>
    <recommendedName>
        <fullName>Exopolygalacturonase X-2</fullName>
        <shortName>ExoPG</shortName>
        <ecNumber>3.2.1.67</ecNumber>
    </recommendedName>
    <alternativeName>
        <fullName>Galacturan 1,4-alpha-galacturonidase</fullName>
    </alternativeName>
    <alternativeName>
        <fullName>Poly(1,4-alpha-D-galacturonide)galacturonohydrolase</fullName>
    </alternativeName>
</protein>
<sequence length="449" mass="49161">MGFKRTIGLLLGILLALDQVSVLAQPGRPTFAKRPDIQPNPIQPYKAIPLHSRRNSHKVCYVKPSLNGGDDAGRVEAALRRCNNGGTIVLDKEYSICTPLDLRFLKHVDVALTGKVEFCPELEFWQQNVFQFHFQNASSWWVWGGEDIHLYGAGTGVIHGNGQPWWDAAAGNSSVRRPLLFITDGWHGGSITGLKLRQSPNWHNFIANSSDLLISDMDIFSRSSSEAWASNLDGWDTFRSDNVVIQNSVINHDDDCVSFKPNSTNIIVQGLHCNGSHGISVGSLGNYPYQYDIVSDLYIYNNTMANTTTAARLKVWPGAEAVKKGNPPWVGGGGKGYVRNVTYDLMINDNNDLAIQIDQCYGAINASECLDHPSGVILTNVLFKNMWGTSNGANDPVAGQLICGSADSCDNIRAENVTLTNSSGQPSEWQCRYMDEELLDLGGVGCIPA</sequence>